<dbReference type="EC" id="1.8.1.2" evidence="1"/>
<dbReference type="EMBL" id="CP001011">
    <property type="protein sequence ID" value="ACB92190.1"/>
    <property type="molecule type" value="Genomic_DNA"/>
</dbReference>
<dbReference type="RefSeq" id="WP_004089014.1">
    <property type="nucleotide sequence ID" value="NC_010577.1"/>
</dbReference>
<dbReference type="SMR" id="B2IA31"/>
<dbReference type="GeneID" id="93904495"/>
<dbReference type="KEGG" id="xfn:XfasM23_0751"/>
<dbReference type="HOGENOM" id="CLU_001975_3_2_6"/>
<dbReference type="UniPathway" id="UPA00140">
    <property type="reaction ID" value="UER00207"/>
</dbReference>
<dbReference type="Proteomes" id="UP000001698">
    <property type="component" value="Chromosome"/>
</dbReference>
<dbReference type="GO" id="GO:0009337">
    <property type="term" value="C:sulfite reductase complex (NADPH)"/>
    <property type="evidence" value="ECO:0007669"/>
    <property type="project" value="InterPro"/>
</dbReference>
<dbReference type="GO" id="GO:0051539">
    <property type="term" value="F:4 iron, 4 sulfur cluster binding"/>
    <property type="evidence" value="ECO:0007669"/>
    <property type="project" value="UniProtKB-KW"/>
</dbReference>
<dbReference type="GO" id="GO:0020037">
    <property type="term" value="F:heme binding"/>
    <property type="evidence" value="ECO:0007669"/>
    <property type="project" value="InterPro"/>
</dbReference>
<dbReference type="GO" id="GO:0046872">
    <property type="term" value="F:metal ion binding"/>
    <property type="evidence" value="ECO:0007669"/>
    <property type="project" value="UniProtKB-KW"/>
</dbReference>
<dbReference type="GO" id="GO:0050661">
    <property type="term" value="F:NADP binding"/>
    <property type="evidence" value="ECO:0007669"/>
    <property type="project" value="InterPro"/>
</dbReference>
<dbReference type="GO" id="GO:0050311">
    <property type="term" value="F:sulfite reductase (ferredoxin) activity"/>
    <property type="evidence" value="ECO:0007669"/>
    <property type="project" value="TreeGrafter"/>
</dbReference>
<dbReference type="GO" id="GO:0004783">
    <property type="term" value="F:sulfite reductase (NADPH) activity"/>
    <property type="evidence" value="ECO:0007669"/>
    <property type="project" value="UniProtKB-UniRule"/>
</dbReference>
<dbReference type="GO" id="GO:0019344">
    <property type="term" value="P:cysteine biosynthetic process"/>
    <property type="evidence" value="ECO:0007669"/>
    <property type="project" value="UniProtKB-KW"/>
</dbReference>
<dbReference type="GO" id="GO:0070814">
    <property type="term" value="P:hydrogen sulfide biosynthetic process"/>
    <property type="evidence" value="ECO:0007669"/>
    <property type="project" value="UniProtKB-UniRule"/>
</dbReference>
<dbReference type="GO" id="GO:0000103">
    <property type="term" value="P:sulfate assimilation"/>
    <property type="evidence" value="ECO:0007669"/>
    <property type="project" value="UniProtKB-UniRule"/>
</dbReference>
<dbReference type="FunFam" id="3.30.413.10:FF:000003">
    <property type="entry name" value="Sulfite reductase [NADPH] hemoprotein beta-component"/>
    <property type="match status" value="1"/>
</dbReference>
<dbReference type="Gene3D" id="3.30.413.10">
    <property type="entry name" value="Sulfite Reductase Hemoprotein, domain 1"/>
    <property type="match status" value="2"/>
</dbReference>
<dbReference type="HAMAP" id="MF_01540">
    <property type="entry name" value="CysI"/>
    <property type="match status" value="1"/>
</dbReference>
<dbReference type="InterPro" id="IPR011786">
    <property type="entry name" value="CysI"/>
</dbReference>
<dbReference type="InterPro" id="IPR005117">
    <property type="entry name" value="NiRdtase/SiRdtase_haem-b_fer"/>
</dbReference>
<dbReference type="InterPro" id="IPR036136">
    <property type="entry name" value="Nit/Sulf_reduc_fer-like_dom_sf"/>
</dbReference>
<dbReference type="InterPro" id="IPR006067">
    <property type="entry name" value="NO2/SO3_Rdtase_4Fe4S_dom"/>
</dbReference>
<dbReference type="InterPro" id="IPR045169">
    <property type="entry name" value="NO2/SO3_Rdtase_4Fe4S_prot"/>
</dbReference>
<dbReference type="InterPro" id="IPR045854">
    <property type="entry name" value="NO2/SO3_Rdtase_4Fe4S_sf"/>
</dbReference>
<dbReference type="InterPro" id="IPR006066">
    <property type="entry name" value="NO2/SO3_Rdtase_FeS/sirohaem_BS"/>
</dbReference>
<dbReference type="NCBIfam" id="TIGR02041">
    <property type="entry name" value="CysI"/>
    <property type="match status" value="1"/>
</dbReference>
<dbReference type="NCBIfam" id="NF010029">
    <property type="entry name" value="PRK13504.1"/>
    <property type="match status" value="1"/>
</dbReference>
<dbReference type="PANTHER" id="PTHR11493:SF47">
    <property type="entry name" value="SULFITE REDUCTASE [NADPH] SUBUNIT BETA"/>
    <property type="match status" value="1"/>
</dbReference>
<dbReference type="PANTHER" id="PTHR11493">
    <property type="entry name" value="SULFITE REDUCTASE [NADPH] SUBUNIT BETA-RELATED"/>
    <property type="match status" value="1"/>
</dbReference>
<dbReference type="Pfam" id="PF01077">
    <property type="entry name" value="NIR_SIR"/>
    <property type="match status" value="1"/>
</dbReference>
<dbReference type="Pfam" id="PF03460">
    <property type="entry name" value="NIR_SIR_ferr"/>
    <property type="match status" value="2"/>
</dbReference>
<dbReference type="PRINTS" id="PR00397">
    <property type="entry name" value="SIROHAEM"/>
</dbReference>
<dbReference type="SUPFAM" id="SSF56014">
    <property type="entry name" value="Nitrite and sulphite reductase 4Fe-4S domain-like"/>
    <property type="match status" value="2"/>
</dbReference>
<dbReference type="SUPFAM" id="SSF55124">
    <property type="entry name" value="Nitrite/Sulfite reductase N-terminal domain-like"/>
    <property type="match status" value="2"/>
</dbReference>
<dbReference type="PROSITE" id="PS00365">
    <property type="entry name" value="NIR_SIR"/>
    <property type="match status" value="1"/>
</dbReference>
<sequence>MSSSSIEDIKGKSHRLRGSLLESLANPTTGALGESDQTLIKYHGSYQQDDRDLREERRRQKLEPAYQFMIRTRTPGGVITPQQWLQLDAIATRYANHSLRVTTRQAFQFHGVIKRELKTTMQAINAALIDTLAACGDVNRNVQVAANPLLSRAHADLYTDAAHLSEHLLPNTRAYYEIWLDEKKVAGAGEEEEPIYGPHYLPRKFKIGFAAPPINDVDVFANDLGFIAVIVDNTLLGYNVTIGGGMGTTHGDPDTWPRVGNIIGFITRADLITISTAIVTTQRDFGNRTLRKRARFKYTIDDRGLDCIVGEIQQRAGITLQPARPFVFEHNGDRYGWIEGEDGHWHLTLSLPAGRIADTEGSTLLSGFREIAQLGIGEFRMTPNQNVVIAGISPGQRAAIDALVTQYGLDTGNRAPTALGRHAMACVALPTCGLAMAEAERYLPDFNAKLQPILEKYGLAEAPILLRISGCPNGCSRPYLAEIALVGKAPGRYNLMLGGDQRGQRLNTLYRENITETEILAALEPLLGRYQQKRLPSEGFGDFLHRTGIIALPPYPTHRHVISSTLQA</sequence>
<evidence type="ECO:0000255" key="1">
    <source>
        <dbReference type="HAMAP-Rule" id="MF_01540"/>
    </source>
</evidence>
<reference key="1">
    <citation type="journal article" date="2010" name="J. Bacteriol.">
        <title>Whole genome sequences of two Xylella fastidiosa strains (M12 and M23) causing almond leaf scorch disease in California.</title>
        <authorList>
            <person name="Chen J."/>
            <person name="Xie G."/>
            <person name="Han S."/>
            <person name="Chertkov O."/>
            <person name="Sims D."/>
            <person name="Civerolo E.L."/>
        </authorList>
    </citation>
    <scope>NUCLEOTIDE SEQUENCE [LARGE SCALE GENOMIC DNA]</scope>
    <source>
        <strain>M23</strain>
    </source>
</reference>
<organism>
    <name type="scientific">Xylella fastidiosa (strain M23)</name>
    <dbReference type="NCBI Taxonomy" id="405441"/>
    <lineage>
        <taxon>Bacteria</taxon>
        <taxon>Pseudomonadati</taxon>
        <taxon>Pseudomonadota</taxon>
        <taxon>Gammaproteobacteria</taxon>
        <taxon>Lysobacterales</taxon>
        <taxon>Lysobacteraceae</taxon>
        <taxon>Xylella</taxon>
    </lineage>
</organism>
<protein>
    <recommendedName>
        <fullName evidence="1">Sulfite reductase [NADPH] hemoprotein beta-component</fullName>
        <shortName evidence="1">SiR-HP</shortName>
        <shortName evidence="1">SiRHP</shortName>
        <ecNumber evidence="1">1.8.1.2</ecNumber>
    </recommendedName>
</protein>
<feature type="chain" id="PRO_0000388537" description="Sulfite reductase [NADPH] hemoprotein beta-component">
    <location>
        <begin position="1"/>
        <end position="568"/>
    </location>
</feature>
<feature type="binding site" evidence="1">
    <location>
        <position position="426"/>
    </location>
    <ligand>
        <name>[4Fe-4S] cluster</name>
        <dbReference type="ChEBI" id="CHEBI:49883"/>
    </ligand>
</feature>
<feature type="binding site" evidence="1">
    <location>
        <position position="432"/>
    </location>
    <ligand>
        <name>[4Fe-4S] cluster</name>
        <dbReference type="ChEBI" id="CHEBI:49883"/>
    </ligand>
</feature>
<feature type="binding site" evidence="1">
    <location>
        <position position="471"/>
    </location>
    <ligand>
        <name>[4Fe-4S] cluster</name>
        <dbReference type="ChEBI" id="CHEBI:49883"/>
    </ligand>
</feature>
<feature type="binding site" evidence="1">
    <location>
        <position position="475"/>
    </location>
    <ligand>
        <name>[4Fe-4S] cluster</name>
        <dbReference type="ChEBI" id="CHEBI:49883"/>
    </ligand>
</feature>
<feature type="binding site" description="axial binding residue" evidence="1">
    <location>
        <position position="475"/>
    </location>
    <ligand>
        <name>siroheme</name>
        <dbReference type="ChEBI" id="CHEBI:60052"/>
    </ligand>
    <ligandPart>
        <name>Fe</name>
        <dbReference type="ChEBI" id="CHEBI:18248"/>
    </ligandPart>
</feature>
<name>CYSI_XYLF2</name>
<comment type="function">
    <text evidence="1">Component of the sulfite reductase complex that catalyzes the 6-electron reduction of sulfite to sulfide. This is one of several activities required for the biosynthesis of L-cysteine from sulfate.</text>
</comment>
<comment type="catalytic activity">
    <reaction evidence="1">
        <text>hydrogen sulfide + 3 NADP(+) + 3 H2O = sulfite + 3 NADPH + 4 H(+)</text>
        <dbReference type="Rhea" id="RHEA:13801"/>
        <dbReference type="ChEBI" id="CHEBI:15377"/>
        <dbReference type="ChEBI" id="CHEBI:15378"/>
        <dbReference type="ChEBI" id="CHEBI:17359"/>
        <dbReference type="ChEBI" id="CHEBI:29919"/>
        <dbReference type="ChEBI" id="CHEBI:57783"/>
        <dbReference type="ChEBI" id="CHEBI:58349"/>
        <dbReference type="EC" id="1.8.1.2"/>
    </reaction>
</comment>
<comment type="cofactor">
    <cofactor evidence="1">
        <name>siroheme</name>
        <dbReference type="ChEBI" id="CHEBI:60052"/>
    </cofactor>
    <text evidence="1">Binds 1 siroheme per subunit.</text>
</comment>
<comment type="cofactor">
    <cofactor evidence="1">
        <name>[4Fe-4S] cluster</name>
        <dbReference type="ChEBI" id="CHEBI:49883"/>
    </cofactor>
    <text evidence="1">Binds 1 [4Fe-4S] cluster per subunit.</text>
</comment>
<comment type="pathway">
    <text evidence="1">Sulfur metabolism; hydrogen sulfide biosynthesis; hydrogen sulfide from sulfite (NADPH route): step 1/1.</text>
</comment>
<comment type="subunit">
    <text evidence="1">Alpha(8)-beta(8). The alpha component is a flavoprotein, the beta component is a hemoprotein.</text>
</comment>
<comment type="similarity">
    <text evidence="1">Belongs to the nitrite and sulfite reductase 4Fe-4S domain family.</text>
</comment>
<accession>B2IA31</accession>
<proteinExistence type="inferred from homology"/>
<keyword id="KW-0004">4Fe-4S</keyword>
<keyword id="KW-0028">Amino-acid biosynthesis</keyword>
<keyword id="KW-0198">Cysteine biosynthesis</keyword>
<keyword id="KW-0349">Heme</keyword>
<keyword id="KW-0408">Iron</keyword>
<keyword id="KW-0411">Iron-sulfur</keyword>
<keyword id="KW-0479">Metal-binding</keyword>
<keyword id="KW-0521">NADP</keyword>
<keyword id="KW-0560">Oxidoreductase</keyword>
<gene>
    <name evidence="1" type="primary">cysI</name>
    <name type="ordered locus">XfasM23_0751</name>
</gene>